<keyword id="KW-0012">Acyltransferase</keyword>
<keyword id="KW-1185">Reference proteome</keyword>
<keyword id="KW-0808">Transferase</keyword>
<comment type="function">
    <text evidence="1">Putative gamma-glutamylcyclotransferase.</text>
</comment>
<comment type="tissue specificity">
    <text evidence="2">In embryos, expression is seen in heart cells of the dorsal vessel and hindgut visceral mesoderm.</text>
</comment>
<comment type="similarity">
    <text evidence="3">Belongs to the gamma-glutamylcyclotransferase family.</text>
</comment>
<comment type="sequence caution" evidence="3">
    <conflict type="erroneous initiation">
        <sequence resource="EMBL-CDS" id="AAL25392"/>
    </conflict>
</comment>
<accession>Q9W0Y1</accession>
<accession>Q95T30</accession>
<dbReference type="EC" id="2.3.2.-"/>
<dbReference type="EMBL" id="AE013599">
    <property type="protein sequence ID" value="AAF47298.1"/>
    <property type="molecule type" value="Genomic_DNA"/>
</dbReference>
<dbReference type="EMBL" id="BT011448">
    <property type="protein sequence ID" value="AAR99106.1"/>
    <property type="molecule type" value="mRNA"/>
</dbReference>
<dbReference type="EMBL" id="AY060353">
    <property type="protein sequence ID" value="AAL25392.1"/>
    <property type="status" value="ALT_INIT"/>
    <property type="molecule type" value="mRNA"/>
</dbReference>
<dbReference type="RefSeq" id="NP_001033974.1">
    <property type="nucleotide sequence ID" value="NM_001038885.2"/>
</dbReference>
<dbReference type="RefSeq" id="NP_611983.2">
    <property type="nucleotide sequence ID" value="NM_138139.4"/>
</dbReference>
<dbReference type="SMR" id="Q9W0Y1"/>
<dbReference type="BioGRID" id="63557">
    <property type="interactions" value="3"/>
</dbReference>
<dbReference type="DIP" id="DIP-23056N"/>
<dbReference type="FunCoup" id="Q9W0Y1">
    <property type="interactions" value="108"/>
</dbReference>
<dbReference type="STRING" id="7227.FBpp0072317"/>
<dbReference type="PaxDb" id="7227-FBpp0072317"/>
<dbReference type="DNASU" id="37989"/>
<dbReference type="EnsemblMetazoa" id="FBtr0072411">
    <property type="protein sequence ID" value="FBpp0072317"/>
    <property type="gene ID" value="FBgn0035083"/>
</dbReference>
<dbReference type="GeneID" id="37989"/>
<dbReference type="KEGG" id="dme:Dmel_CG2803"/>
<dbReference type="AGR" id="FB:FBgn0035083"/>
<dbReference type="CTD" id="37989"/>
<dbReference type="FlyBase" id="FBgn0035083">
    <property type="gene designation" value="Tina-1"/>
</dbReference>
<dbReference type="VEuPathDB" id="VectorBase:FBgn0035083"/>
<dbReference type="eggNOG" id="KOG4450">
    <property type="taxonomic scope" value="Eukaryota"/>
</dbReference>
<dbReference type="GeneTree" id="ENSGT00390000010543"/>
<dbReference type="HOGENOM" id="CLU_083466_1_0_1"/>
<dbReference type="InParanoid" id="Q9W0Y1"/>
<dbReference type="OMA" id="FENIPTM"/>
<dbReference type="OrthoDB" id="113620at2759"/>
<dbReference type="PhylomeDB" id="Q9W0Y1"/>
<dbReference type="BioGRID-ORCS" id="37989">
    <property type="hits" value="0 hits in 1 CRISPR screen"/>
</dbReference>
<dbReference type="GenomeRNAi" id="37989"/>
<dbReference type="PRO" id="PR:Q9W0Y1"/>
<dbReference type="Proteomes" id="UP000000803">
    <property type="component" value="Chromosome 2R"/>
</dbReference>
<dbReference type="Bgee" id="FBgn0035083">
    <property type="expression patterns" value="Expressed in lamina monopolar neuron L3 (Drosophila) in brain and 236 other cell types or tissues"/>
</dbReference>
<dbReference type="ExpressionAtlas" id="Q9W0Y1">
    <property type="expression patterns" value="baseline and differential"/>
</dbReference>
<dbReference type="GO" id="GO:0005829">
    <property type="term" value="C:cytosol"/>
    <property type="evidence" value="ECO:0000318"/>
    <property type="project" value="GO_Central"/>
</dbReference>
<dbReference type="GO" id="GO:0005759">
    <property type="term" value="C:mitochondrial matrix"/>
    <property type="evidence" value="ECO:0000314"/>
    <property type="project" value="FlyBase"/>
</dbReference>
<dbReference type="GO" id="GO:0016746">
    <property type="term" value="F:acyltransferase activity"/>
    <property type="evidence" value="ECO:0007669"/>
    <property type="project" value="UniProtKB-KW"/>
</dbReference>
<dbReference type="GO" id="GO:0061929">
    <property type="term" value="F:gamma-glutamylaminecyclotransferase activity"/>
    <property type="evidence" value="ECO:0000250"/>
    <property type="project" value="FlyBase"/>
</dbReference>
<dbReference type="CDD" id="cd06661">
    <property type="entry name" value="GGCT_like"/>
    <property type="match status" value="1"/>
</dbReference>
<dbReference type="FunFam" id="3.10.490.10:FF:000011">
    <property type="entry name" value="Troponin C-akin-1 protein"/>
    <property type="match status" value="1"/>
</dbReference>
<dbReference type="Gene3D" id="3.10.490.10">
    <property type="entry name" value="Gamma-glutamyl cyclotransferase-like"/>
    <property type="match status" value="1"/>
</dbReference>
<dbReference type="InterPro" id="IPR009288">
    <property type="entry name" value="AIG2-like_dom"/>
</dbReference>
<dbReference type="InterPro" id="IPR039126">
    <property type="entry name" value="GGACT"/>
</dbReference>
<dbReference type="InterPro" id="IPR013024">
    <property type="entry name" value="GGCT-like"/>
</dbReference>
<dbReference type="InterPro" id="IPR036568">
    <property type="entry name" value="GGCT-like_sf"/>
</dbReference>
<dbReference type="PANTHER" id="PTHR12510">
    <property type="entry name" value="TROPONIN C-AKIN-1 PROTEIN"/>
    <property type="match status" value="1"/>
</dbReference>
<dbReference type="PANTHER" id="PTHR12510:SF18">
    <property type="entry name" value="TROPONIN C-AKIN-1 PROTEIN"/>
    <property type="match status" value="1"/>
</dbReference>
<dbReference type="Pfam" id="PF06094">
    <property type="entry name" value="GGACT"/>
    <property type="match status" value="1"/>
</dbReference>
<dbReference type="SUPFAM" id="SSF110857">
    <property type="entry name" value="Gamma-glutamyl cyclotransferase-like"/>
    <property type="match status" value="1"/>
</dbReference>
<sequence length="167" mass="19056">MGQAKKVSSALSKLFVYGALKYGQPSNSILASSGNGFAKFWCKATTTQKLPLVIATRYNIPFLLNKPGVGYYVTGEIYEVDDRMLNSLDNLEDCEEIYTREMHDMNIGVGEGTVPCWVYLLQKYPENLLSLRYLSSYENSTTHPYIMRHRRTHKHPAQDDLTYEAQN</sequence>
<protein>
    <recommendedName>
        <fullName>Troponin C-akin-1 protein</fullName>
        <ecNumber>2.3.2.-</ecNumber>
    </recommendedName>
    <alternativeName>
        <fullName>Putative gamma-glutamylcyclotransferase</fullName>
    </alternativeName>
</protein>
<proteinExistence type="evidence at transcript level"/>
<gene>
    <name type="primary">Tina-1</name>
    <name type="ORF">CG2803</name>
</gene>
<organism>
    <name type="scientific">Drosophila melanogaster</name>
    <name type="common">Fruit fly</name>
    <dbReference type="NCBI Taxonomy" id="7227"/>
    <lineage>
        <taxon>Eukaryota</taxon>
        <taxon>Metazoa</taxon>
        <taxon>Ecdysozoa</taxon>
        <taxon>Arthropoda</taxon>
        <taxon>Hexapoda</taxon>
        <taxon>Insecta</taxon>
        <taxon>Pterygota</taxon>
        <taxon>Neoptera</taxon>
        <taxon>Endopterygota</taxon>
        <taxon>Diptera</taxon>
        <taxon>Brachycera</taxon>
        <taxon>Muscomorpha</taxon>
        <taxon>Ephydroidea</taxon>
        <taxon>Drosophilidae</taxon>
        <taxon>Drosophila</taxon>
        <taxon>Sophophora</taxon>
    </lineage>
</organism>
<evidence type="ECO:0000250" key="1"/>
<evidence type="ECO:0000269" key="2">
    <source>
    </source>
</evidence>
<evidence type="ECO:0000305" key="3"/>
<feature type="chain" id="PRO_0000184784" description="Troponin C-akin-1 protein">
    <location>
        <begin position="1"/>
        <end position="167"/>
    </location>
</feature>
<feature type="active site" description="Proton acceptor" evidence="1">
    <location>
        <position position="92"/>
    </location>
</feature>
<feature type="binding site" evidence="1">
    <location>
        <begin position="17"/>
        <end position="20"/>
    </location>
    <ligand>
        <name>substrate</name>
    </ligand>
</feature>
<reference key="1">
    <citation type="journal article" date="2000" name="Science">
        <title>The genome sequence of Drosophila melanogaster.</title>
        <authorList>
            <person name="Adams M.D."/>
            <person name="Celniker S.E."/>
            <person name="Holt R.A."/>
            <person name="Evans C.A."/>
            <person name="Gocayne J.D."/>
            <person name="Amanatides P.G."/>
            <person name="Scherer S.E."/>
            <person name="Li P.W."/>
            <person name="Hoskins R.A."/>
            <person name="Galle R.F."/>
            <person name="George R.A."/>
            <person name="Lewis S.E."/>
            <person name="Richards S."/>
            <person name="Ashburner M."/>
            <person name="Henderson S.N."/>
            <person name="Sutton G.G."/>
            <person name="Wortman J.R."/>
            <person name="Yandell M.D."/>
            <person name="Zhang Q."/>
            <person name="Chen L.X."/>
            <person name="Brandon R.C."/>
            <person name="Rogers Y.-H.C."/>
            <person name="Blazej R.G."/>
            <person name="Champe M."/>
            <person name="Pfeiffer B.D."/>
            <person name="Wan K.H."/>
            <person name="Doyle C."/>
            <person name="Baxter E.G."/>
            <person name="Helt G."/>
            <person name="Nelson C.R."/>
            <person name="Miklos G.L.G."/>
            <person name="Abril J.F."/>
            <person name="Agbayani A."/>
            <person name="An H.-J."/>
            <person name="Andrews-Pfannkoch C."/>
            <person name="Baldwin D."/>
            <person name="Ballew R.M."/>
            <person name="Basu A."/>
            <person name="Baxendale J."/>
            <person name="Bayraktaroglu L."/>
            <person name="Beasley E.M."/>
            <person name="Beeson K.Y."/>
            <person name="Benos P.V."/>
            <person name="Berman B.P."/>
            <person name="Bhandari D."/>
            <person name="Bolshakov S."/>
            <person name="Borkova D."/>
            <person name="Botchan M.R."/>
            <person name="Bouck J."/>
            <person name="Brokstein P."/>
            <person name="Brottier P."/>
            <person name="Burtis K.C."/>
            <person name="Busam D.A."/>
            <person name="Butler H."/>
            <person name="Cadieu E."/>
            <person name="Center A."/>
            <person name="Chandra I."/>
            <person name="Cherry J.M."/>
            <person name="Cawley S."/>
            <person name="Dahlke C."/>
            <person name="Davenport L.B."/>
            <person name="Davies P."/>
            <person name="de Pablos B."/>
            <person name="Delcher A."/>
            <person name="Deng Z."/>
            <person name="Mays A.D."/>
            <person name="Dew I."/>
            <person name="Dietz S.M."/>
            <person name="Dodson K."/>
            <person name="Doup L.E."/>
            <person name="Downes M."/>
            <person name="Dugan-Rocha S."/>
            <person name="Dunkov B.C."/>
            <person name="Dunn P."/>
            <person name="Durbin K.J."/>
            <person name="Evangelista C.C."/>
            <person name="Ferraz C."/>
            <person name="Ferriera S."/>
            <person name="Fleischmann W."/>
            <person name="Fosler C."/>
            <person name="Gabrielian A.E."/>
            <person name="Garg N.S."/>
            <person name="Gelbart W.M."/>
            <person name="Glasser K."/>
            <person name="Glodek A."/>
            <person name="Gong F."/>
            <person name="Gorrell J.H."/>
            <person name="Gu Z."/>
            <person name="Guan P."/>
            <person name="Harris M."/>
            <person name="Harris N.L."/>
            <person name="Harvey D.A."/>
            <person name="Heiman T.J."/>
            <person name="Hernandez J.R."/>
            <person name="Houck J."/>
            <person name="Hostin D."/>
            <person name="Houston K.A."/>
            <person name="Howland T.J."/>
            <person name="Wei M.-H."/>
            <person name="Ibegwam C."/>
            <person name="Jalali M."/>
            <person name="Kalush F."/>
            <person name="Karpen G.H."/>
            <person name="Ke Z."/>
            <person name="Kennison J.A."/>
            <person name="Ketchum K.A."/>
            <person name="Kimmel B.E."/>
            <person name="Kodira C.D."/>
            <person name="Kraft C.L."/>
            <person name="Kravitz S."/>
            <person name="Kulp D."/>
            <person name="Lai Z."/>
            <person name="Lasko P."/>
            <person name="Lei Y."/>
            <person name="Levitsky A.A."/>
            <person name="Li J.H."/>
            <person name="Li Z."/>
            <person name="Liang Y."/>
            <person name="Lin X."/>
            <person name="Liu X."/>
            <person name="Mattei B."/>
            <person name="McIntosh T.C."/>
            <person name="McLeod M.P."/>
            <person name="McPherson D."/>
            <person name="Merkulov G."/>
            <person name="Milshina N.V."/>
            <person name="Mobarry C."/>
            <person name="Morris J."/>
            <person name="Moshrefi A."/>
            <person name="Mount S.M."/>
            <person name="Moy M."/>
            <person name="Murphy B."/>
            <person name="Murphy L."/>
            <person name="Muzny D.M."/>
            <person name="Nelson D.L."/>
            <person name="Nelson D.R."/>
            <person name="Nelson K.A."/>
            <person name="Nixon K."/>
            <person name="Nusskern D.R."/>
            <person name="Pacleb J.M."/>
            <person name="Palazzolo M."/>
            <person name="Pittman G.S."/>
            <person name="Pan S."/>
            <person name="Pollard J."/>
            <person name="Puri V."/>
            <person name="Reese M.G."/>
            <person name="Reinert K."/>
            <person name="Remington K."/>
            <person name="Saunders R.D.C."/>
            <person name="Scheeler F."/>
            <person name="Shen H."/>
            <person name="Shue B.C."/>
            <person name="Siden-Kiamos I."/>
            <person name="Simpson M."/>
            <person name="Skupski M.P."/>
            <person name="Smith T.J."/>
            <person name="Spier E."/>
            <person name="Spradling A.C."/>
            <person name="Stapleton M."/>
            <person name="Strong R."/>
            <person name="Sun E."/>
            <person name="Svirskas R."/>
            <person name="Tector C."/>
            <person name="Turner R."/>
            <person name="Venter E."/>
            <person name="Wang A.H."/>
            <person name="Wang X."/>
            <person name="Wang Z.-Y."/>
            <person name="Wassarman D.A."/>
            <person name="Weinstock G.M."/>
            <person name="Weissenbach J."/>
            <person name="Williams S.M."/>
            <person name="Woodage T."/>
            <person name="Worley K.C."/>
            <person name="Wu D."/>
            <person name="Yang S."/>
            <person name="Yao Q.A."/>
            <person name="Ye J."/>
            <person name="Yeh R.-F."/>
            <person name="Zaveri J.S."/>
            <person name="Zhan M."/>
            <person name="Zhang G."/>
            <person name="Zhao Q."/>
            <person name="Zheng L."/>
            <person name="Zheng X.H."/>
            <person name="Zhong F.N."/>
            <person name="Zhong W."/>
            <person name="Zhou X."/>
            <person name="Zhu S.C."/>
            <person name="Zhu X."/>
            <person name="Smith H.O."/>
            <person name="Gibbs R.A."/>
            <person name="Myers E.W."/>
            <person name="Rubin G.M."/>
            <person name="Venter J.C."/>
        </authorList>
    </citation>
    <scope>NUCLEOTIDE SEQUENCE [LARGE SCALE GENOMIC DNA]</scope>
    <source>
        <strain>Berkeley</strain>
    </source>
</reference>
<reference key="2">
    <citation type="journal article" date="2002" name="Genome Biol.">
        <title>Annotation of the Drosophila melanogaster euchromatic genome: a systematic review.</title>
        <authorList>
            <person name="Misra S."/>
            <person name="Crosby M.A."/>
            <person name="Mungall C.J."/>
            <person name="Matthews B.B."/>
            <person name="Campbell K.S."/>
            <person name="Hradecky P."/>
            <person name="Huang Y."/>
            <person name="Kaminker J.S."/>
            <person name="Millburn G.H."/>
            <person name="Prochnik S.E."/>
            <person name="Smith C.D."/>
            <person name="Tupy J.L."/>
            <person name="Whitfield E.J."/>
            <person name="Bayraktaroglu L."/>
            <person name="Berman B.P."/>
            <person name="Bettencourt B.R."/>
            <person name="Celniker S.E."/>
            <person name="de Grey A.D.N.J."/>
            <person name="Drysdale R.A."/>
            <person name="Harris N.L."/>
            <person name="Richter J."/>
            <person name="Russo S."/>
            <person name="Schroeder A.J."/>
            <person name="Shu S.Q."/>
            <person name="Stapleton M."/>
            <person name="Yamada C."/>
            <person name="Ashburner M."/>
            <person name="Gelbart W.M."/>
            <person name="Rubin G.M."/>
            <person name="Lewis S.E."/>
        </authorList>
    </citation>
    <scope>GENOME REANNOTATION</scope>
    <source>
        <strain>Berkeley</strain>
    </source>
</reference>
<reference key="3">
    <citation type="submission" date="2004-01" db="EMBL/GenBank/DDBJ databases">
        <authorList>
            <person name="Stapleton M."/>
            <person name="Carlson J.W."/>
            <person name="Chavez C."/>
            <person name="Frise E."/>
            <person name="George R.A."/>
            <person name="Pacleb J.M."/>
            <person name="Park S."/>
            <person name="Wan K.H."/>
            <person name="Yu C."/>
            <person name="Rubin G.M."/>
            <person name="Celniker S.E."/>
        </authorList>
    </citation>
    <scope>NUCLEOTIDE SEQUENCE [LARGE SCALE MRNA]</scope>
    <source>
        <strain>Berkeley</strain>
        <tissue>Embryo</tissue>
    </source>
</reference>
<reference key="4">
    <citation type="journal article" date="2002" name="Genome Biol.">
        <title>A Drosophila full-length cDNA resource.</title>
        <authorList>
            <person name="Stapleton M."/>
            <person name="Carlson J.W."/>
            <person name="Brokstein P."/>
            <person name="Yu C."/>
            <person name="Champe M."/>
            <person name="George R.A."/>
            <person name="Guarin H."/>
            <person name="Kronmiller B."/>
            <person name="Pacleb J.M."/>
            <person name="Park S."/>
            <person name="Wan K.H."/>
            <person name="Rubin G.M."/>
            <person name="Celniker S.E."/>
        </authorList>
    </citation>
    <scope>NUCLEOTIDE SEQUENCE [LARGE SCALE MRNA] OF 6-167</scope>
    <source>
        <strain>Berkeley</strain>
        <tissue>Head</tissue>
    </source>
</reference>
<reference key="5">
    <citation type="journal article" date="2002" name="Development">
        <title>The Hox gene abdominal-A specifies heart cell fate in the Drosophila dorsal vessel.</title>
        <authorList>
            <person name="Lovato T.L."/>
            <person name="Nguyen T.P."/>
            <person name="Molina M.R."/>
            <person name="Cripps R.M."/>
        </authorList>
    </citation>
    <scope>TISSUE SPECIFICITY</scope>
</reference>
<name>TINA1_DROME</name>